<proteinExistence type="evidence at protein level"/>
<accession>Q9CYK2</accession>
<accession>Q8BH20</accession>
<accession>Q8VE07</accession>
<dbReference type="EC" id="2.3.2.5"/>
<dbReference type="EMBL" id="AK037197">
    <property type="protein sequence ID" value="BAC29748.1"/>
    <property type="molecule type" value="mRNA"/>
</dbReference>
<dbReference type="EMBL" id="AK045974">
    <property type="protein sequence ID" value="BAC32556.1"/>
    <property type="molecule type" value="mRNA"/>
</dbReference>
<dbReference type="EMBL" id="AK017598">
    <property type="protein sequence ID" value="BAB30831.1"/>
    <property type="molecule type" value="mRNA"/>
</dbReference>
<dbReference type="EMBL" id="BC020023">
    <property type="protein sequence ID" value="AAH20023.1"/>
    <property type="molecule type" value="mRNA"/>
</dbReference>
<dbReference type="CCDS" id="CCDS28983.1">
    <molecule id="Q9CYK2-1"/>
</dbReference>
<dbReference type="CCDS" id="CCDS89158.1">
    <molecule id="Q9CYK2-2"/>
</dbReference>
<dbReference type="RefSeq" id="NP_001303658.1">
    <property type="nucleotide sequence ID" value="NM_001316729.1"/>
</dbReference>
<dbReference type="RefSeq" id="NP_081731.1">
    <property type="nucleotide sequence ID" value="NM_027455.3"/>
</dbReference>
<dbReference type="PDB" id="3SI1">
    <property type="method" value="X-ray"/>
    <property type="resolution" value="2.90 A"/>
    <property type="chains" value="A=36-362"/>
</dbReference>
<dbReference type="PDB" id="3SI2">
    <property type="method" value="X-ray"/>
    <property type="resolution" value="1.80 A"/>
    <property type="chains" value="A=36-362"/>
</dbReference>
<dbReference type="PDBsum" id="3SI1"/>
<dbReference type="PDBsum" id="3SI2"/>
<dbReference type="SMR" id="Q9CYK2"/>
<dbReference type="BioGRID" id="214118">
    <property type="interactions" value="1"/>
</dbReference>
<dbReference type="FunCoup" id="Q9CYK2">
    <property type="interactions" value="15"/>
</dbReference>
<dbReference type="STRING" id="10090.ENSMUSP00000038732"/>
<dbReference type="BindingDB" id="Q9CYK2"/>
<dbReference type="ChEMBL" id="CHEMBL4105900"/>
<dbReference type="GuidetoPHARMACOLOGY" id="2411"/>
<dbReference type="MEROPS" id="M28.979"/>
<dbReference type="GlyCosmos" id="Q9CYK2">
    <property type="glycosylation" value="2 sites, No reported glycans"/>
</dbReference>
<dbReference type="GlyGen" id="Q9CYK2">
    <property type="glycosylation" value="2 sites"/>
</dbReference>
<dbReference type="iPTMnet" id="Q9CYK2"/>
<dbReference type="PhosphoSitePlus" id="Q9CYK2"/>
<dbReference type="PaxDb" id="10090-ENSMUSP00000038732"/>
<dbReference type="PeptideAtlas" id="Q9CYK2"/>
<dbReference type="ProteomicsDB" id="300333">
    <molecule id="Q9CYK2-1"/>
</dbReference>
<dbReference type="ProteomicsDB" id="300334">
    <molecule id="Q9CYK2-2"/>
</dbReference>
<dbReference type="DNASU" id="70536"/>
<dbReference type="GeneID" id="70536"/>
<dbReference type="KEGG" id="mmu:70536"/>
<dbReference type="UCSC" id="uc008dpv.1">
    <molecule id="Q9CYK2-1"/>
    <property type="organism name" value="mouse"/>
</dbReference>
<dbReference type="UCSC" id="uc008dpw.1">
    <molecule id="Q9CYK2-2"/>
    <property type="organism name" value="mouse"/>
</dbReference>
<dbReference type="AGR" id="MGI:1917786"/>
<dbReference type="CTD" id="25797"/>
<dbReference type="MGI" id="MGI:1917786">
    <property type="gene designation" value="Qpct"/>
</dbReference>
<dbReference type="eggNOG" id="KOG3946">
    <property type="taxonomic scope" value="Eukaryota"/>
</dbReference>
<dbReference type="InParanoid" id="Q9CYK2"/>
<dbReference type="OrthoDB" id="3907302at2759"/>
<dbReference type="PhylomeDB" id="Q9CYK2"/>
<dbReference type="TreeFam" id="TF315071"/>
<dbReference type="BRENDA" id="2.3.2.5">
    <property type="organism ID" value="3474"/>
</dbReference>
<dbReference type="Reactome" id="R-MMU-6798695">
    <property type="pathway name" value="Neutrophil degranulation"/>
</dbReference>
<dbReference type="BioGRID-ORCS" id="70536">
    <property type="hits" value="2 hits in 80 CRISPR screens"/>
</dbReference>
<dbReference type="ChiTaRS" id="Qpct">
    <property type="organism name" value="mouse"/>
</dbReference>
<dbReference type="EvolutionaryTrace" id="Q9CYK2"/>
<dbReference type="PRO" id="PR:Q9CYK2"/>
<dbReference type="Proteomes" id="UP000000589">
    <property type="component" value="Unplaced"/>
</dbReference>
<dbReference type="RNAct" id="Q9CYK2">
    <property type="molecule type" value="protein"/>
</dbReference>
<dbReference type="GO" id="GO:0005576">
    <property type="term" value="C:extracellular region"/>
    <property type="evidence" value="ECO:0007669"/>
    <property type="project" value="UniProtKB-SubCell"/>
</dbReference>
<dbReference type="GO" id="GO:0016603">
    <property type="term" value="F:glutaminyl-peptide cyclotransferase activity"/>
    <property type="evidence" value="ECO:0000250"/>
    <property type="project" value="UniProtKB"/>
</dbReference>
<dbReference type="GO" id="GO:0008270">
    <property type="term" value="F:zinc ion binding"/>
    <property type="evidence" value="ECO:0000250"/>
    <property type="project" value="UniProtKB"/>
</dbReference>
<dbReference type="GO" id="GO:0017186">
    <property type="term" value="P:peptidyl-pyroglutamic acid biosynthetic process, using glutaminyl-peptide cyclotransferase"/>
    <property type="evidence" value="ECO:0000250"/>
    <property type="project" value="UniProtKB"/>
</dbReference>
<dbReference type="CDD" id="cd03880">
    <property type="entry name" value="M28_QC_like"/>
    <property type="match status" value="1"/>
</dbReference>
<dbReference type="FunFam" id="3.40.630.10:FF:000029">
    <property type="entry name" value="Glutaminyl-peptide cyclotransferase"/>
    <property type="match status" value="1"/>
</dbReference>
<dbReference type="Gene3D" id="3.40.630.10">
    <property type="entry name" value="Zn peptidases"/>
    <property type="match status" value="1"/>
</dbReference>
<dbReference type="InterPro" id="IPR037457">
    <property type="entry name" value="M28_QC"/>
</dbReference>
<dbReference type="InterPro" id="IPR007484">
    <property type="entry name" value="Peptidase_M28"/>
</dbReference>
<dbReference type="InterPro" id="IPR040234">
    <property type="entry name" value="QC/QCL"/>
</dbReference>
<dbReference type="PANTHER" id="PTHR12283">
    <property type="entry name" value="GLUTAMINYL-PEPTIDE CYCLOTRANSFERASE"/>
    <property type="match status" value="1"/>
</dbReference>
<dbReference type="PANTHER" id="PTHR12283:SF5">
    <property type="entry name" value="GLUTAMINYL-PEPTIDE CYCLOTRANSFERASE"/>
    <property type="match status" value="1"/>
</dbReference>
<dbReference type="Pfam" id="PF04389">
    <property type="entry name" value="Peptidase_M28"/>
    <property type="match status" value="1"/>
</dbReference>
<dbReference type="SUPFAM" id="SSF53187">
    <property type="entry name" value="Zn-dependent exopeptidases"/>
    <property type="match status" value="1"/>
</dbReference>
<gene>
    <name type="primary">Qpct</name>
</gene>
<keyword id="KW-0002">3D-structure</keyword>
<keyword id="KW-0012">Acyltransferase</keyword>
<keyword id="KW-0025">Alternative splicing</keyword>
<keyword id="KW-1015">Disulfide bond</keyword>
<keyword id="KW-0325">Glycoprotein</keyword>
<keyword id="KW-0479">Metal-binding</keyword>
<keyword id="KW-1185">Reference proteome</keyword>
<keyword id="KW-0964">Secreted</keyword>
<keyword id="KW-0732">Signal</keyword>
<keyword id="KW-0808">Transferase</keyword>
<keyword id="KW-0862">Zinc</keyword>
<sequence>MAGSEDKRVVGTLHLLLLQATVLSLTAGNLSLVSAAWTQEKNHHQPAHLNSSSLQQVAEGTSISEMWQNDLRPLLIERYPGSPGSYSARQHIMQRIQRLQAEWVVEVDTFLSRTPYGYRSFSNIISTLNPEAKRHLVLACHYDSKYFPRWDSRVFVGATDSAVPCAMMLELARALDKKLHSLKDVSGSKPDLSLRLIFFDGEEAFHHWSPQDSLYGSRHLAQKMASSPHPPGSRGTNQLDGMDLLVLLDLIGAANPTFPNFFPKTTRWFNRLQAIEKELYELGLLKDHSLERKYFQNFGYGNIIQDDHIPFLRKGVPVLHLIASPFPEVWHTMDDNEENLHASTIDNLNKIIQVFVLEYLHL</sequence>
<evidence type="ECO:0000250" key="1"/>
<evidence type="ECO:0000250" key="2">
    <source>
        <dbReference type="UniProtKB" id="B7QK46"/>
    </source>
</evidence>
<evidence type="ECO:0000250" key="3">
    <source>
        <dbReference type="UniProtKB" id="Q16769"/>
    </source>
</evidence>
<evidence type="ECO:0000255" key="4"/>
<evidence type="ECO:0000269" key="5">
    <source>
    </source>
</evidence>
<evidence type="ECO:0000303" key="6">
    <source>
    </source>
</evidence>
<evidence type="ECO:0000305" key="7"/>
<evidence type="ECO:0007744" key="8">
    <source>
        <dbReference type="PDB" id="3SI1"/>
    </source>
</evidence>
<evidence type="ECO:0007744" key="9">
    <source>
        <dbReference type="PDB" id="3SI2"/>
    </source>
</evidence>
<evidence type="ECO:0007829" key="10">
    <source>
        <dbReference type="PDB" id="3SI1"/>
    </source>
</evidence>
<evidence type="ECO:0007829" key="11">
    <source>
        <dbReference type="PDB" id="3SI2"/>
    </source>
</evidence>
<comment type="function">
    <text evidence="1">Responsible for the biosynthesis of pyroglutamyl peptides. Has a bias against acidic and tryptophan residues adjacent to the N-terminal glutaminyl residue and a lack of importance of chain length after the second residue (By similarity).</text>
</comment>
<comment type="catalytic activity">
    <reaction>
        <text>N-terminal L-glutaminyl-[peptide] = N-terminal 5-oxo-L-prolyl-[peptide] + NH4(+)</text>
        <dbReference type="Rhea" id="RHEA:23652"/>
        <dbReference type="Rhea" id="RHEA-COMP:11736"/>
        <dbReference type="Rhea" id="RHEA-COMP:11846"/>
        <dbReference type="ChEBI" id="CHEBI:28938"/>
        <dbReference type="ChEBI" id="CHEBI:64722"/>
        <dbReference type="ChEBI" id="CHEBI:87215"/>
        <dbReference type="EC" id="2.3.2.5"/>
    </reaction>
</comment>
<comment type="subcellular location">
    <subcellularLocation>
        <location evidence="1">Secreted</location>
    </subcellularLocation>
</comment>
<comment type="alternative products">
    <event type="alternative splicing"/>
    <isoform>
        <id>Q9CYK2-1</id>
        <name>1</name>
        <sequence type="displayed"/>
    </isoform>
    <isoform>
        <id>Q9CYK2-2</id>
        <name>2</name>
        <sequence type="described" ref="VSP_013911"/>
    </isoform>
</comment>
<comment type="similarity">
    <text evidence="7">Belongs to the glutaminyl-peptide cyclotransferase family.</text>
</comment>
<comment type="caution">
    <text evidence="2 5">It is unclear whether this protein requires a metal cofactor for catalysis. It was originally proposed to be a Zn(2+)-dependent metalloenzyme based on structural similarities to bacterial aminopeptidases and the observation that it can bind Zn(2+) ions, typically in a 1:1 stoichiometry (PubMed:21671571). However, a recent study suggests a Zn(2+)-independent catalytic mechanism (By similarity).</text>
</comment>
<protein>
    <recommendedName>
        <fullName>Glutaminyl-peptide cyclotransferase</fullName>
        <ecNumber>2.3.2.5</ecNumber>
    </recommendedName>
    <alternativeName>
        <fullName>Glutaminyl cyclase</fullName>
        <shortName>QC</shortName>
    </alternativeName>
    <alternativeName>
        <fullName>Glutaminyl-tRNA cyclotransferase</fullName>
    </alternativeName>
</protein>
<organism>
    <name type="scientific">Mus musculus</name>
    <name type="common">Mouse</name>
    <dbReference type="NCBI Taxonomy" id="10090"/>
    <lineage>
        <taxon>Eukaryota</taxon>
        <taxon>Metazoa</taxon>
        <taxon>Chordata</taxon>
        <taxon>Craniata</taxon>
        <taxon>Vertebrata</taxon>
        <taxon>Euteleostomi</taxon>
        <taxon>Mammalia</taxon>
        <taxon>Eutheria</taxon>
        <taxon>Euarchontoglires</taxon>
        <taxon>Glires</taxon>
        <taxon>Rodentia</taxon>
        <taxon>Myomorpha</taxon>
        <taxon>Muroidea</taxon>
        <taxon>Muridae</taxon>
        <taxon>Murinae</taxon>
        <taxon>Mus</taxon>
        <taxon>Mus</taxon>
    </lineage>
</organism>
<name>QPCT_MOUSE</name>
<reference key="1">
    <citation type="journal article" date="2005" name="Science">
        <title>The transcriptional landscape of the mammalian genome.</title>
        <authorList>
            <person name="Carninci P."/>
            <person name="Kasukawa T."/>
            <person name="Katayama S."/>
            <person name="Gough J."/>
            <person name="Frith M.C."/>
            <person name="Maeda N."/>
            <person name="Oyama R."/>
            <person name="Ravasi T."/>
            <person name="Lenhard B."/>
            <person name="Wells C."/>
            <person name="Kodzius R."/>
            <person name="Shimokawa K."/>
            <person name="Bajic V.B."/>
            <person name="Brenner S.E."/>
            <person name="Batalov S."/>
            <person name="Forrest A.R."/>
            <person name="Zavolan M."/>
            <person name="Davis M.J."/>
            <person name="Wilming L.G."/>
            <person name="Aidinis V."/>
            <person name="Allen J.E."/>
            <person name="Ambesi-Impiombato A."/>
            <person name="Apweiler R."/>
            <person name="Aturaliya R.N."/>
            <person name="Bailey T.L."/>
            <person name="Bansal M."/>
            <person name="Baxter L."/>
            <person name="Beisel K.W."/>
            <person name="Bersano T."/>
            <person name="Bono H."/>
            <person name="Chalk A.M."/>
            <person name="Chiu K.P."/>
            <person name="Choudhary V."/>
            <person name="Christoffels A."/>
            <person name="Clutterbuck D.R."/>
            <person name="Crowe M.L."/>
            <person name="Dalla E."/>
            <person name="Dalrymple B.P."/>
            <person name="de Bono B."/>
            <person name="Della Gatta G."/>
            <person name="di Bernardo D."/>
            <person name="Down T."/>
            <person name="Engstrom P."/>
            <person name="Fagiolini M."/>
            <person name="Faulkner G."/>
            <person name="Fletcher C.F."/>
            <person name="Fukushima T."/>
            <person name="Furuno M."/>
            <person name="Futaki S."/>
            <person name="Gariboldi M."/>
            <person name="Georgii-Hemming P."/>
            <person name="Gingeras T.R."/>
            <person name="Gojobori T."/>
            <person name="Green R.E."/>
            <person name="Gustincich S."/>
            <person name="Harbers M."/>
            <person name="Hayashi Y."/>
            <person name="Hensch T.K."/>
            <person name="Hirokawa N."/>
            <person name="Hill D."/>
            <person name="Huminiecki L."/>
            <person name="Iacono M."/>
            <person name="Ikeo K."/>
            <person name="Iwama A."/>
            <person name="Ishikawa T."/>
            <person name="Jakt M."/>
            <person name="Kanapin A."/>
            <person name="Katoh M."/>
            <person name="Kawasawa Y."/>
            <person name="Kelso J."/>
            <person name="Kitamura H."/>
            <person name="Kitano H."/>
            <person name="Kollias G."/>
            <person name="Krishnan S.P."/>
            <person name="Kruger A."/>
            <person name="Kummerfeld S.K."/>
            <person name="Kurochkin I.V."/>
            <person name="Lareau L.F."/>
            <person name="Lazarevic D."/>
            <person name="Lipovich L."/>
            <person name="Liu J."/>
            <person name="Liuni S."/>
            <person name="McWilliam S."/>
            <person name="Madan Babu M."/>
            <person name="Madera M."/>
            <person name="Marchionni L."/>
            <person name="Matsuda H."/>
            <person name="Matsuzawa S."/>
            <person name="Miki H."/>
            <person name="Mignone F."/>
            <person name="Miyake S."/>
            <person name="Morris K."/>
            <person name="Mottagui-Tabar S."/>
            <person name="Mulder N."/>
            <person name="Nakano N."/>
            <person name="Nakauchi H."/>
            <person name="Ng P."/>
            <person name="Nilsson R."/>
            <person name="Nishiguchi S."/>
            <person name="Nishikawa S."/>
            <person name="Nori F."/>
            <person name="Ohara O."/>
            <person name="Okazaki Y."/>
            <person name="Orlando V."/>
            <person name="Pang K.C."/>
            <person name="Pavan W.J."/>
            <person name="Pavesi G."/>
            <person name="Pesole G."/>
            <person name="Petrovsky N."/>
            <person name="Piazza S."/>
            <person name="Reed J."/>
            <person name="Reid J.F."/>
            <person name="Ring B.Z."/>
            <person name="Ringwald M."/>
            <person name="Rost B."/>
            <person name="Ruan Y."/>
            <person name="Salzberg S.L."/>
            <person name="Sandelin A."/>
            <person name="Schneider C."/>
            <person name="Schoenbach C."/>
            <person name="Sekiguchi K."/>
            <person name="Semple C.A."/>
            <person name="Seno S."/>
            <person name="Sessa L."/>
            <person name="Sheng Y."/>
            <person name="Shibata Y."/>
            <person name="Shimada H."/>
            <person name="Shimada K."/>
            <person name="Silva D."/>
            <person name="Sinclair B."/>
            <person name="Sperling S."/>
            <person name="Stupka E."/>
            <person name="Sugiura K."/>
            <person name="Sultana R."/>
            <person name="Takenaka Y."/>
            <person name="Taki K."/>
            <person name="Tammoja K."/>
            <person name="Tan S.L."/>
            <person name="Tang S."/>
            <person name="Taylor M.S."/>
            <person name="Tegner J."/>
            <person name="Teichmann S.A."/>
            <person name="Ueda H.R."/>
            <person name="van Nimwegen E."/>
            <person name="Verardo R."/>
            <person name="Wei C.L."/>
            <person name="Yagi K."/>
            <person name="Yamanishi H."/>
            <person name="Zabarovsky E."/>
            <person name="Zhu S."/>
            <person name="Zimmer A."/>
            <person name="Hide W."/>
            <person name="Bult C."/>
            <person name="Grimmond S.M."/>
            <person name="Teasdale R.D."/>
            <person name="Liu E.T."/>
            <person name="Brusic V."/>
            <person name="Quackenbush J."/>
            <person name="Wahlestedt C."/>
            <person name="Mattick J.S."/>
            <person name="Hume D.A."/>
            <person name="Kai C."/>
            <person name="Sasaki D."/>
            <person name="Tomaru Y."/>
            <person name="Fukuda S."/>
            <person name="Kanamori-Katayama M."/>
            <person name="Suzuki M."/>
            <person name="Aoki J."/>
            <person name="Arakawa T."/>
            <person name="Iida J."/>
            <person name="Imamura K."/>
            <person name="Itoh M."/>
            <person name="Kato T."/>
            <person name="Kawaji H."/>
            <person name="Kawagashira N."/>
            <person name="Kawashima T."/>
            <person name="Kojima M."/>
            <person name="Kondo S."/>
            <person name="Konno H."/>
            <person name="Nakano K."/>
            <person name="Ninomiya N."/>
            <person name="Nishio T."/>
            <person name="Okada M."/>
            <person name="Plessy C."/>
            <person name="Shibata K."/>
            <person name="Shiraki T."/>
            <person name="Suzuki S."/>
            <person name="Tagami M."/>
            <person name="Waki K."/>
            <person name="Watahiki A."/>
            <person name="Okamura-Oho Y."/>
            <person name="Suzuki H."/>
            <person name="Kawai J."/>
            <person name="Hayashizaki Y."/>
        </authorList>
    </citation>
    <scope>NUCLEOTIDE SEQUENCE [LARGE SCALE MRNA] (ISOFORM 1)</scope>
    <source>
        <strain>C57BL/6J</strain>
        <tissue>Corpora quadrigemina</tissue>
        <tissue>Embryo</tissue>
        <tissue>Skin</tissue>
    </source>
</reference>
<reference key="2">
    <citation type="journal article" date="2004" name="Genome Res.">
        <title>The status, quality, and expansion of the NIH full-length cDNA project: the Mammalian Gene Collection (MGC).</title>
        <authorList>
            <consortium name="The MGC Project Team"/>
        </authorList>
    </citation>
    <scope>NUCLEOTIDE SEQUENCE [LARGE SCALE MRNA] (ISOFORM 2)</scope>
    <source>
        <strain>Czech II</strain>
        <tissue>Mammary gland</tissue>
    </source>
</reference>
<reference key="3">
    <citation type="journal article" date="2011" name="Biochemistry">
        <title>Structures of glycosylated mammalian glutaminyl cyclases reveal conformational variability near the active center.</title>
        <authorList>
            <person name="Ruiz-Carrillo D."/>
            <person name="Koch B."/>
            <person name="Parthier C."/>
            <person name="Wermann M."/>
            <person name="Dambe T."/>
            <person name="Buchholz M."/>
            <person name="Ludwig H.H."/>
            <person name="Heiser U."/>
            <person name="Rahfeld J.U."/>
            <person name="Stubbs M.T."/>
            <person name="Schilling S."/>
            <person name="Demuth H.U."/>
        </authorList>
    </citation>
    <scope>X-RAY CRYSTALLOGRAPHY (1.8 ANGSTROMS) OF 36-362 IN COMPLEX WITH ZINC</scope>
    <scope>GLYCOSYLATION AT ASN-50</scope>
    <scope>DISULFIDE BOND</scope>
</reference>
<feature type="signal peptide" evidence="4">
    <location>
        <begin position="1"/>
        <end position="35"/>
    </location>
</feature>
<feature type="chain" id="PRO_0000022196" description="Glutaminyl-peptide cyclotransferase">
    <location>
        <begin position="36"/>
        <end position="362"/>
    </location>
</feature>
<feature type="active site" description="Proton acceptor" evidence="3">
    <location>
        <position position="202"/>
    </location>
</feature>
<feature type="active site" description="Proton acceptor" evidence="3">
    <location>
        <position position="249"/>
    </location>
</feature>
<feature type="binding site" evidence="5 8 9">
    <location>
        <position position="160"/>
    </location>
    <ligand>
        <name>Zn(2+)</name>
        <dbReference type="ChEBI" id="CHEBI:29105"/>
    </ligand>
</feature>
<feature type="binding site" evidence="5 8 9">
    <location>
        <position position="203"/>
    </location>
    <ligand>
        <name>Zn(2+)</name>
        <dbReference type="ChEBI" id="CHEBI:29105"/>
    </ligand>
</feature>
<feature type="binding site" evidence="5 8 9">
    <location>
        <position position="331"/>
    </location>
    <ligand>
        <name>Zn(2+)</name>
        <dbReference type="ChEBI" id="CHEBI:29105"/>
    </ligand>
</feature>
<feature type="glycosylation site" description="N-linked (GlcNAc...) asparagine" evidence="4">
    <location>
        <position position="29"/>
    </location>
</feature>
<feature type="glycosylation site" description="N-linked (GlcNAc...) asparagine" evidence="5 8 9">
    <location>
        <position position="50"/>
    </location>
</feature>
<feature type="disulfide bond" evidence="5 8 9">
    <location>
        <begin position="140"/>
        <end position="165"/>
    </location>
</feature>
<feature type="splice variant" id="VSP_013911" description="In isoform 2." evidence="6">
    <location>
        <begin position="42"/>
        <end position="90"/>
    </location>
</feature>
<feature type="sequence conflict" description="In Ref. 1; BAC29748/BAC32556/BAB30831." evidence="7" ref="1">
    <original>R</original>
    <variation>L</variation>
    <location>
        <position position="8"/>
    </location>
</feature>
<feature type="sequence conflict" description="In Ref. 2; AAH20023." evidence="7" ref="2">
    <original>S</original>
    <variation>N</variation>
    <location>
        <position position="31"/>
    </location>
</feature>
<feature type="sequence conflict" description="In Ref. 2; AAH20023." evidence="7" ref="2">
    <original>A</original>
    <variation>G</variation>
    <location>
        <position position="35"/>
    </location>
</feature>
<feature type="sequence conflict" description="In Ref. 1; BAB30831." evidence="7" ref="1">
    <original>S</original>
    <variation>T</variation>
    <location>
        <position position="213"/>
    </location>
</feature>
<feature type="sequence conflict" description="In Ref. 1; BAB30831." evidence="7" ref="1">
    <original>F</original>
    <variation>S</variation>
    <location>
        <position position="326"/>
    </location>
</feature>
<feature type="helix" evidence="11">
    <location>
        <begin position="37"/>
        <end position="43"/>
    </location>
</feature>
<feature type="helix" evidence="11">
    <location>
        <begin position="51"/>
        <end position="60"/>
    </location>
</feature>
<feature type="helix" evidence="11">
    <location>
        <begin position="63"/>
        <end position="69"/>
    </location>
</feature>
<feature type="helix" evidence="11">
    <location>
        <begin position="72"/>
        <end position="74"/>
    </location>
</feature>
<feature type="helix" evidence="11">
    <location>
        <begin position="83"/>
        <end position="97"/>
    </location>
</feature>
<feature type="strand" evidence="11">
    <location>
        <begin position="99"/>
        <end position="101"/>
    </location>
</feature>
<feature type="strand" evidence="11">
    <location>
        <begin position="103"/>
        <end position="114"/>
    </location>
</feature>
<feature type="strand" evidence="11">
    <location>
        <begin position="117"/>
        <end position="129"/>
    </location>
</feature>
<feature type="strand" evidence="11">
    <location>
        <begin position="132"/>
        <end position="141"/>
    </location>
</feature>
<feature type="strand" evidence="10">
    <location>
        <begin position="150"/>
        <end position="152"/>
    </location>
</feature>
<feature type="turn" evidence="11">
    <location>
        <begin position="158"/>
        <end position="161"/>
    </location>
</feature>
<feature type="helix" evidence="11">
    <location>
        <begin position="162"/>
        <end position="174"/>
    </location>
</feature>
<feature type="helix" evidence="11">
    <location>
        <begin position="176"/>
        <end position="180"/>
    </location>
</feature>
<feature type="helix" evidence="11">
    <location>
        <begin position="181"/>
        <end position="183"/>
    </location>
</feature>
<feature type="strand" evidence="11">
    <location>
        <begin position="192"/>
        <end position="200"/>
    </location>
</feature>
<feature type="strand" evidence="11">
    <location>
        <begin position="205"/>
        <end position="207"/>
    </location>
</feature>
<feature type="strand" evidence="11">
    <location>
        <begin position="209"/>
        <end position="213"/>
    </location>
</feature>
<feature type="helix" evidence="11">
    <location>
        <begin position="215"/>
        <end position="225"/>
    </location>
</feature>
<feature type="strand" evidence="11">
    <location>
        <begin position="227"/>
        <end position="230"/>
    </location>
</feature>
<feature type="helix" evidence="11">
    <location>
        <begin position="238"/>
        <end position="241"/>
    </location>
</feature>
<feature type="strand" evidence="11">
    <location>
        <begin position="242"/>
        <end position="250"/>
    </location>
</feature>
<feature type="strand" evidence="11">
    <location>
        <begin position="253"/>
        <end position="255"/>
    </location>
</feature>
<feature type="helix" evidence="11">
    <location>
        <begin position="263"/>
        <end position="265"/>
    </location>
</feature>
<feature type="helix" evidence="11">
    <location>
        <begin position="266"/>
        <end position="281"/>
    </location>
</feature>
<feature type="strand" evidence="11">
    <location>
        <begin position="285"/>
        <end position="287"/>
    </location>
</feature>
<feature type="helix" evidence="11">
    <location>
        <begin position="290"/>
        <end position="292"/>
    </location>
</feature>
<feature type="strand" evidence="11">
    <location>
        <begin position="298"/>
        <end position="300"/>
    </location>
</feature>
<feature type="helix" evidence="11">
    <location>
        <begin position="309"/>
        <end position="312"/>
    </location>
</feature>
<feature type="turn" evidence="11">
    <location>
        <begin position="313"/>
        <end position="315"/>
    </location>
</feature>
<feature type="strand" evidence="11">
    <location>
        <begin position="318"/>
        <end position="322"/>
    </location>
</feature>
<feature type="turn" evidence="11">
    <location>
        <begin position="328"/>
        <end position="331"/>
    </location>
</feature>
<feature type="helix" evidence="11">
    <location>
        <begin position="337"/>
        <end position="339"/>
    </location>
</feature>
<feature type="helix" evidence="11">
    <location>
        <begin position="342"/>
        <end position="360"/>
    </location>
</feature>